<sequence>MDEDEKDRAKRASRNKSEKKRRDQFNVLIKELSSMLPGNTRKMDKTTVLEKVIGFLQKHNEVSAQTEISEIQQDWKPSFLSNEEFTQLMLEALDGFIIAVTTGGSIIYVSDSITPLLGHLPCDVLDQNLLNFLPEQEHSEIYKMLSSCMLMTDSASSDCLKTDNELEFYCHLLRGSLNPKEFPTYEYIKFVGNFRSYSNVPNSTCNGFDEAVPRAYRASPGKQICFVATVRLATPQFLKEMCIVEEPLEEFTSRHSLEWKFLFLDHRAPPIIGYLPFEVLGTSGYDYYHIDDLELLARCHEHLMQFGKGKSCCYRFLTKGQQWIWLQTHYYITYHQWNSKPEFIVCTHMVVSYADVRVERRQEMGLEEVSSEVVSSALKDSGSSLDPEQHFNALDIGASILSASRTPSVSSRSSPKSSHTPKSDPASTPTKLTAEASTPLQRTSSTQQDLSAHRLSQPTALQASLPSQPSCELLPQQLLPQATLQSQPAPLAQFSAQFSMFQTIKDQLEQRTRILQANIRWQQEELQKIQEQLCLVQDSSVQMFLQQPAVSLSFSNIQQPEPQPLQQRPGVISQQQLVLSPQLPGQIASPQTPSQQVLREASVISSQGPKAERSTELTTGSSRPTRSTATLFGPSTSLSRRGPGPSSGPGASAAGCSHDQQLRLLLSQPIQPMMPTSCNARHPSDLSMAGSQAKYSQNQQMFQSLEVQTSSSGSPIVLMGQAVLNQGFATTPPSQSSSLPPMQLQHQQHQQQRYLQVQTPSSLHNEQTDSLLLSSYSPQQGNMGYHQTQQQQQQQQLPRRSNSLSESSNLPQPLR</sequence>
<gene>
    <name type="primary">NPAS2</name>
    <name type="synonym">MOP4</name>
</gene>
<proteinExistence type="evidence at protein level"/>
<evidence type="ECO:0000250" key="1">
    <source>
        <dbReference type="UniProtKB" id="P97460"/>
    </source>
</evidence>
<evidence type="ECO:0000255" key="2">
    <source>
        <dbReference type="PROSITE-ProRule" id="PRU00140"/>
    </source>
</evidence>
<evidence type="ECO:0000255" key="3">
    <source>
        <dbReference type="PROSITE-ProRule" id="PRU00981"/>
    </source>
</evidence>
<evidence type="ECO:0000256" key="4">
    <source>
        <dbReference type="SAM" id="MobiDB-lite"/>
    </source>
</evidence>
<evidence type="ECO:0000269" key="5">
    <source>
    </source>
</evidence>
<evidence type="ECO:0000269" key="6">
    <source>
    </source>
</evidence>
<evidence type="ECO:0000305" key="7"/>
<organism>
    <name type="scientific">Gallus gallus</name>
    <name type="common">Chicken</name>
    <dbReference type="NCBI Taxonomy" id="9031"/>
    <lineage>
        <taxon>Eukaryota</taxon>
        <taxon>Metazoa</taxon>
        <taxon>Chordata</taxon>
        <taxon>Craniata</taxon>
        <taxon>Vertebrata</taxon>
        <taxon>Euteleostomi</taxon>
        <taxon>Archelosauria</taxon>
        <taxon>Archosauria</taxon>
        <taxon>Dinosauria</taxon>
        <taxon>Saurischia</taxon>
        <taxon>Theropoda</taxon>
        <taxon>Coelurosauria</taxon>
        <taxon>Aves</taxon>
        <taxon>Neognathae</taxon>
        <taxon>Galloanserae</taxon>
        <taxon>Galliformes</taxon>
        <taxon>Phasianidae</taxon>
        <taxon>Phasianinae</taxon>
        <taxon>Gallus</taxon>
    </lineage>
</organism>
<feature type="chain" id="PRO_0000273634" description="Neuronal PAS domain-containing protein 2">
    <location>
        <begin position="1"/>
        <end position="815"/>
    </location>
</feature>
<feature type="domain" description="bHLH" evidence="3">
    <location>
        <begin position="9"/>
        <end position="59"/>
    </location>
</feature>
<feature type="domain" description="PAS 1" evidence="2">
    <location>
        <begin position="82"/>
        <end position="152"/>
    </location>
</feature>
<feature type="domain" description="PAS 2" evidence="2">
    <location>
        <begin position="237"/>
        <end position="307"/>
    </location>
</feature>
<feature type="domain" description="PAC">
    <location>
        <begin position="311"/>
        <end position="354"/>
    </location>
</feature>
<feature type="region of interest" description="Sufficient for heterodimer formation with BMAL1, E-box binding and for the effect of NADPH" evidence="1">
    <location>
        <begin position="1"/>
        <end position="61"/>
    </location>
</feature>
<feature type="region of interest" description="Disordered" evidence="4">
    <location>
        <begin position="1"/>
        <end position="21"/>
    </location>
</feature>
<feature type="region of interest" description="Disordered" evidence="4">
    <location>
        <begin position="405"/>
        <end position="467"/>
    </location>
</feature>
<feature type="region of interest" description="Disordered" evidence="4">
    <location>
        <begin position="584"/>
        <end position="656"/>
    </location>
</feature>
<feature type="region of interest" description="Disordered" evidence="4">
    <location>
        <begin position="728"/>
        <end position="815"/>
    </location>
</feature>
<feature type="compositionally biased region" description="Basic and acidic residues" evidence="4">
    <location>
        <begin position="1"/>
        <end position="10"/>
    </location>
</feature>
<feature type="compositionally biased region" description="Low complexity" evidence="4">
    <location>
        <begin position="405"/>
        <end position="420"/>
    </location>
</feature>
<feature type="compositionally biased region" description="Polar residues" evidence="4">
    <location>
        <begin position="425"/>
        <end position="462"/>
    </location>
</feature>
<feature type="compositionally biased region" description="Polar residues" evidence="4">
    <location>
        <begin position="588"/>
        <end position="608"/>
    </location>
</feature>
<feature type="compositionally biased region" description="Polar residues" evidence="4">
    <location>
        <begin position="616"/>
        <end position="630"/>
    </location>
</feature>
<feature type="compositionally biased region" description="Low complexity" evidence="4">
    <location>
        <begin position="633"/>
        <end position="655"/>
    </location>
</feature>
<feature type="compositionally biased region" description="Low complexity" evidence="4">
    <location>
        <begin position="732"/>
        <end position="752"/>
    </location>
</feature>
<feature type="compositionally biased region" description="Polar residues" evidence="4">
    <location>
        <begin position="753"/>
        <end position="786"/>
    </location>
</feature>
<feature type="compositionally biased region" description="Low complexity" evidence="4">
    <location>
        <begin position="787"/>
        <end position="815"/>
    </location>
</feature>
<feature type="binding site" description="axial binding residue" evidence="1">
    <location>
        <position position="119"/>
    </location>
    <ligand>
        <name>heme b</name>
        <dbReference type="ChEBI" id="CHEBI:60344"/>
    </ligand>
    <ligandPart>
        <name>Fe</name>
        <dbReference type="ChEBI" id="CHEBI:18248"/>
    </ligandPart>
</feature>
<feature type="binding site" description="axial binding residue" evidence="1">
    <location>
        <position position="171"/>
    </location>
    <ligand>
        <name>heme b</name>
        <dbReference type="ChEBI" id="CHEBI:60344"/>
    </ligand>
    <ligandPart>
        <name>Fe</name>
        <dbReference type="ChEBI" id="CHEBI:18248"/>
    </ligandPart>
</feature>
<feature type="sequence conflict" description="In Ref. 2; AAG24647." evidence="7" ref="2">
    <original>ERRQEMGLEEV</original>
    <variation>GEETGDGLGRM</variation>
    <location>
        <begin position="359"/>
        <end position="369"/>
    </location>
</feature>
<keyword id="KW-0010">Activator</keyword>
<keyword id="KW-0090">Biological rhythms</keyword>
<keyword id="KW-0238">DNA-binding</keyword>
<keyword id="KW-0349">Heme</keyword>
<keyword id="KW-0408">Iron</keyword>
<keyword id="KW-0479">Metal-binding</keyword>
<keyword id="KW-0539">Nucleus</keyword>
<keyword id="KW-1185">Reference proteome</keyword>
<keyword id="KW-0677">Repeat</keyword>
<keyword id="KW-0804">Transcription</keyword>
<keyword id="KW-0805">Transcription regulation</keyword>
<accession>Q5ZQU2</accession>
<accession>Q9DG34</accession>
<comment type="function">
    <text evidence="6">Transcriptional activator which forms a core component of the circadian clock. The circadian clock, an internal time-keeping system, regulates various physiological processes through the generation of approximately 24 hour circadian rhythms in gene expression, which are translated into rhythms in metabolism and behavior. It is derived from the Latin roots 'circa' (about) and 'diem' (day) and acts as an important regulator of a wide array of physiological functions including metabolism, sleep, body temperature, blood pressure, endocrine, immune, cardiovascular, and renal function. Consists of two major components: the central clock, residing in the suprachiasmatic nucleus (SCN) of the brain, and the peripheral clocks that are present in nearly every tissue and organ system. Both the central and peripheral clocks can be reset by environmental cues, also known as Zeitgebers (German for 'timegivers'). The predominant Zeitgeber for the central clock is light, which is sensed by retina and signals directly to the SCN. The central clock entrains the peripheral clocks through neuronal and hormonal signals, body temperature and feeding-related cues, aligning all clocks with the external light/dark cycle. Circadian rhythms allow an organism to achieve temporal homeostasis with its environment at the molecular level by regulating gene expression to create a peak of protein expression once every 24 hours to control when a particular physiological process is most active with respect to the solar day. Transcription and translation of core clock components (CLOCK, NPAS2, BMAL1, BMAL2, PER1, PER2, PER3, CRY1 and CRY2) plays a critical role in rhythm generation, whereas delays imposed by post-translational modifications (PTMs) are important for determining the period (tau) of the rhythms (tau refers to the period of a rhythm and is the length, in time, of one complete cycle). A diurnal rhythm is synchronized with the day/night cycle, while the ultradian and infradian rhythms have a period shorter and longer than 24 hours, respectively. Disruptions in the circadian rhythms contribute to the pathology of cardiovascular diseases, cancer, metabolic syndromes and aging. A transcription/translation feedback loop (TTFL) forms the core of the molecular circadian clock mechanism. Transcription factors, CLOCK or NPAS2 and BMAL1 or BMAL2, form the positive limb of the feedback loop, act in the form of a heterodimer and activate the transcription of core clock genes and clock-controlled genes (involved in key metabolic processes), harboring E-box elements (5'-CACGTG-3') within their promoters. The core clock genes: PER1/2/3 and CRY1/2 which are transcriptional repressors form the negative limb of the feedback loop and interact with the CLOCK|NPAS2-BMAL1|BMAL2 heterodimer inhibiting its activity and thereby negatively regulating their own expression. This heterodimer also activates nuclear receptors NR1D1/2 and RORA/B/G, which form a second feedback loop and which activate and repress BMAL1 transcription, respectively. NPAS2 positively regulates the circadian expression of AANAT in the retinal photoreceptor cells.</text>
</comment>
<comment type="cofactor">
    <cofactor evidence="1">
        <name>heme</name>
        <dbReference type="ChEBI" id="CHEBI:30413"/>
    </cofactor>
</comment>
<comment type="activity regulation">
    <text evidence="1">Carbon monoxide (CO) and the redox state of the cell can modulate the transcriptional activity of the NPAS2-BMAL1 heterodimer. NADH and NADPH enhance the DNA-binding activity of the heterodimer whereas CO binds the heme group in NPAS2 and inhibits the DNA-binding activity of the heterodimer.</text>
</comment>
<comment type="subunit">
    <text evidence="1">Component of the circadian clock oscillator which includes the CRY proteins, CLOCK or NPAS2, BMAL1 or BMAL2, CSNK1D and/or CSNK1E, TIMELESS and the PER proteins. Efficient DNA binding requires dimerization with another bHLH protein. Forms a heterodimer with BMAL1 and this heterodimerization is required for E-box-dependent transactivation.</text>
</comment>
<comment type="subcellular location">
    <subcellularLocation>
        <location evidence="3">Nucleus</location>
    </subcellularLocation>
</comment>
<comment type="tissue specificity">
    <text evidence="5 6">Expressed in the retinal photoreceptor cells (at protein level). Expressed in the pineal gland and retina.</text>
</comment>
<comment type="induction">
    <text evidence="5 6">Exhibits a circadian rhythm in the retina with peak levels in early subjective night. No circadian rhythm pattern in the pineal gland.</text>
</comment>
<protein>
    <recommendedName>
        <fullName>Neuronal PAS domain-containing protein 2</fullName>
        <shortName>Neuronal PAS2</shortName>
    </recommendedName>
    <alternativeName>
        <fullName>Member of PAS protein 4</fullName>
        <shortName>MOP4</shortName>
    </alternativeName>
</protein>
<reference key="1">
    <citation type="submission" date="2003-09" db="EMBL/GenBank/DDBJ databases">
        <authorList>
            <person name="Codd V."/>
            <person name="Chong N.W."/>
        </authorList>
    </citation>
    <scope>NUCLEOTIDE SEQUENCE [MRNA]</scope>
    <source>
        <tissue>Pineal gland</tissue>
    </source>
</reference>
<reference key="2">
    <citation type="journal article" date="2000" name="J. Biol. Chem.">
        <title>Characterization of the chicken serotonin N-acetyltransferase gene. Activation via clock gene heterodimer/E box interaction.</title>
        <authorList>
            <person name="Chong N.W."/>
            <person name="Bernard M."/>
            <person name="Klein D.C."/>
        </authorList>
    </citation>
    <scope>NUCLEOTIDE SEQUENCE [MRNA] OF 359-469</scope>
    <scope>TISSUE SPECIFICITY</scope>
    <scope>INDUCTION</scope>
    <source>
        <strain>White leghorn</strain>
        <tissue>Pineal gland</tissue>
    </source>
</reference>
<reference key="3">
    <citation type="journal article" date="2010" name="J. Neurochem.">
        <title>CLOCK and NPAS2 have overlapping roles in the circadian oscillation of arylalkylamine N-acetyltransferase mRNA in chicken cone photoreceptors.</title>
        <authorList>
            <person name="Haque R."/>
            <person name="Ali F.G."/>
            <person name="Biscoglia R."/>
            <person name="Abey J."/>
            <person name="Weller J."/>
            <person name="Klein D."/>
            <person name="Iuvone P.M."/>
        </authorList>
    </citation>
    <scope>FUNCTION</scope>
    <scope>INDUCTION</scope>
    <scope>TISSUE SPECIFICITY</scope>
</reference>
<dbReference type="EMBL" id="AF396828">
    <property type="protein sequence ID" value="AAU93340.1"/>
    <property type="molecule type" value="mRNA"/>
</dbReference>
<dbReference type="EMBL" id="AF193071">
    <property type="protein sequence ID" value="AAG24647.1"/>
    <property type="molecule type" value="mRNA"/>
</dbReference>
<dbReference type="RefSeq" id="NP_001025713.1">
    <property type="nucleotide sequence ID" value="NM_001030542.2"/>
</dbReference>
<dbReference type="SMR" id="Q5ZQU2"/>
<dbReference type="FunCoup" id="Q5ZQU2">
    <property type="interactions" value="55"/>
</dbReference>
<dbReference type="STRING" id="9031.ENSGALP00000068763"/>
<dbReference type="PaxDb" id="9031-ENSGALP00000035797"/>
<dbReference type="GeneID" id="395433"/>
<dbReference type="KEGG" id="gga:395433"/>
<dbReference type="CTD" id="4862"/>
<dbReference type="VEuPathDB" id="HostDB:geneid_395433"/>
<dbReference type="eggNOG" id="KOG3561">
    <property type="taxonomic scope" value="Eukaryota"/>
</dbReference>
<dbReference type="InParanoid" id="Q5ZQU2"/>
<dbReference type="OrthoDB" id="411251at2759"/>
<dbReference type="PhylomeDB" id="Q5ZQU2"/>
<dbReference type="PRO" id="PR:Q5ZQU2"/>
<dbReference type="Proteomes" id="UP000000539">
    <property type="component" value="Unassembled WGS sequence"/>
</dbReference>
<dbReference type="GO" id="GO:1990513">
    <property type="term" value="C:CLOCK-BMAL transcription complex"/>
    <property type="evidence" value="ECO:0000318"/>
    <property type="project" value="GO_Central"/>
</dbReference>
<dbReference type="GO" id="GO:0005737">
    <property type="term" value="C:cytoplasm"/>
    <property type="evidence" value="ECO:0007669"/>
    <property type="project" value="InterPro"/>
</dbReference>
<dbReference type="GO" id="GO:0005634">
    <property type="term" value="C:nucleus"/>
    <property type="evidence" value="ECO:0000250"/>
    <property type="project" value="UniProtKB"/>
</dbReference>
<dbReference type="GO" id="GO:0003677">
    <property type="term" value="F:DNA binding"/>
    <property type="evidence" value="ECO:0000250"/>
    <property type="project" value="UniProtKB"/>
</dbReference>
<dbReference type="GO" id="GO:0000981">
    <property type="term" value="F:DNA-binding transcription factor activity, RNA polymerase II-specific"/>
    <property type="evidence" value="ECO:0000318"/>
    <property type="project" value="GO_Central"/>
</dbReference>
<dbReference type="GO" id="GO:0046872">
    <property type="term" value="F:metal ion binding"/>
    <property type="evidence" value="ECO:0007669"/>
    <property type="project" value="UniProtKB-KW"/>
</dbReference>
<dbReference type="GO" id="GO:0046983">
    <property type="term" value="F:protein dimerization activity"/>
    <property type="evidence" value="ECO:0007669"/>
    <property type="project" value="InterPro"/>
</dbReference>
<dbReference type="GO" id="GO:0000978">
    <property type="term" value="F:RNA polymerase II cis-regulatory region sequence-specific DNA binding"/>
    <property type="evidence" value="ECO:0000314"/>
    <property type="project" value="UniProtKB"/>
</dbReference>
<dbReference type="GO" id="GO:0032922">
    <property type="term" value="P:circadian regulation of gene expression"/>
    <property type="evidence" value="ECO:0000315"/>
    <property type="project" value="UniProtKB"/>
</dbReference>
<dbReference type="GO" id="GO:0006974">
    <property type="term" value="P:DNA damage response"/>
    <property type="evidence" value="ECO:0000250"/>
    <property type="project" value="UniProtKB"/>
</dbReference>
<dbReference type="GO" id="GO:0045739">
    <property type="term" value="P:positive regulation of DNA repair"/>
    <property type="evidence" value="ECO:0000250"/>
    <property type="project" value="UniProtKB"/>
</dbReference>
<dbReference type="GO" id="GO:0045893">
    <property type="term" value="P:positive regulation of DNA-templated transcription"/>
    <property type="evidence" value="ECO:0000250"/>
    <property type="project" value="UniProtKB"/>
</dbReference>
<dbReference type="GO" id="GO:0006357">
    <property type="term" value="P:regulation of transcription by RNA polymerase II"/>
    <property type="evidence" value="ECO:0000318"/>
    <property type="project" value="GO_Central"/>
</dbReference>
<dbReference type="GO" id="GO:0051775">
    <property type="term" value="P:response to redox state"/>
    <property type="evidence" value="ECO:0000250"/>
    <property type="project" value="UniProtKB"/>
</dbReference>
<dbReference type="CDD" id="cd19737">
    <property type="entry name" value="bHLH-PAS_NPAS2_PASD4"/>
    <property type="match status" value="1"/>
</dbReference>
<dbReference type="CDD" id="cd00130">
    <property type="entry name" value="PAS"/>
    <property type="match status" value="2"/>
</dbReference>
<dbReference type="FunFam" id="3.30.450.20:FF:000016">
    <property type="entry name" value="Circadian locomoter output cycles protein"/>
    <property type="match status" value="1"/>
</dbReference>
<dbReference type="FunFam" id="4.10.280.10:FF:000013">
    <property type="entry name" value="Circadian locomoter output cycles protein kaput"/>
    <property type="match status" value="1"/>
</dbReference>
<dbReference type="FunFam" id="3.30.450.20:FF:000022">
    <property type="entry name" value="circadian locomoter output cycles protein kaput"/>
    <property type="match status" value="1"/>
</dbReference>
<dbReference type="Gene3D" id="4.10.280.10">
    <property type="entry name" value="Helix-loop-helix DNA-binding domain"/>
    <property type="match status" value="1"/>
</dbReference>
<dbReference type="Gene3D" id="3.30.450.20">
    <property type="entry name" value="PAS domain"/>
    <property type="match status" value="2"/>
</dbReference>
<dbReference type="InterPro" id="IPR011598">
    <property type="entry name" value="bHLH_dom"/>
</dbReference>
<dbReference type="InterPro" id="IPR047230">
    <property type="entry name" value="CLOCK-like"/>
</dbReference>
<dbReference type="InterPro" id="IPR036638">
    <property type="entry name" value="HLH_DNA-bd_sf"/>
</dbReference>
<dbReference type="InterPro" id="IPR001067">
    <property type="entry name" value="Nuc_translocat"/>
</dbReference>
<dbReference type="InterPro" id="IPR001610">
    <property type="entry name" value="PAC"/>
</dbReference>
<dbReference type="InterPro" id="IPR000014">
    <property type="entry name" value="PAS"/>
</dbReference>
<dbReference type="InterPro" id="IPR035965">
    <property type="entry name" value="PAS-like_dom_sf"/>
</dbReference>
<dbReference type="InterPro" id="IPR013767">
    <property type="entry name" value="PAS_fold"/>
</dbReference>
<dbReference type="PANTHER" id="PTHR46055">
    <property type="entry name" value="CIRCADIAN LOCOMOTER OUTPUT CYCLES PROTEIN KAPUT"/>
    <property type="match status" value="1"/>
</dbReference>
<dbReference type="PANTHER" id="PTHR46055:SF1">
    <property type="entry name" value="NEURONAL PAS DOMAIN-CONTAINING PROTEIN 2"/>
    <property type="match status" value="1"/>
</dbReference>
<dbReference type="Pfam" id="PF00010">
    <property type="entry name" value="HLH"/>
    <property type="match status" value="1"/>
</dbReference>
<dbReference type="Pfam" id="PF00989">
    <property type="entry name" value="PAS"/>
    <property type="match status" value="1"/>
</dbReference>
<dbReference type="Pfam" id="PF14598">
    <property type="entry name" value="PAS_11"/>
    <property type="match status" value="1"/>
</dbReference>
<dbReference type="PRINTS" id="PR00785">
    <property type="entry name" value="NCTRNSLOCATR"/>
</dbReference>
<dbReference type="SMART" id="SM00353">
    <property type="entry name" value="HLH"/>
    <property type="match status" value="1"/>
</dbReference>
<dbReference type="SMART" id="SM00086">
    <property type="entry name" value="PAC"/>
    <property type="match status" value="1"/>
</dbReference>
<dbReference type="SMART" id="SM00091">
    <property type="entry name" value="PAS"/>
    <property type="match status" value="2"/>
</dbReference>
<dbReference type="SUPFAM" id="SSF47459">
    <property type="entry name" value="HLH, helix-loop-helix DNA-binding domain"/>
    <property type="match status" value="1"/>
</dbReference>
<dbReference type="SUPFAM" id="SSF55785">
    <property type="entry name" value="PYP-like sensor domain (PAS domain)"/>
    <property type="match status" value="2"/>
</dbReference>
<dbReference type="PROSITE" id="PS50888">
    <property type="entry name" value="BHLH"/>
    <property type="match status" value="1"/>
</dbReference>
<dbReference type="PROSITE" id="PS50112">
    <property type="entry name" value="PAS"/>
    <property type="match status" value="2"/>
</dbReference>
<name>NPAS2_CHICK</name>